<proteinExistence type="evidence at protein level"/>
<gene>
    <name type="primary">sodA</name>
</gene>
<accession>Q7SIC3</accession>
<reference key="1">
    <citation type="journal article" date="2003" name="J. Struct. Biol.">
        <title>Crystal structure of a nucleoside diphosphate kinase from Bacillus halodenitrificans: coexpression of its activity with a Mn-superoxide dismutase.</title>
        <authorList>
            <person name="Chen C.J."/>
            <person name="Liu M.Y."/>
            <person name="Chang T."/>
            <person name="Chang W.C."/>
            <person name="Wang B.C."/>
            <person name="Le Gall J."/>
        </authorList>
    </citation>
    <scope>CATALYTIC ACTIVITY</scope>
    <scope>SUBUNIT</scope>
    <source>
        <strain>ATCC 49067</strain>
    </source>
</reference>
<reference key="2">
    <citation type="journal article" date="2002" name="J. Struct. Biol.">
        <title>Three-dimensional structure of manganese superoxide dismutase from Bacillus halodenitrificans, a component of the so-called 'green protein'.</title>
        <authorList>
            <person name="Liao J."/>
            <person name="Liu M.Y."/>
            <person name="Chang T."/>
            <person name="Li M."/>
            <person name="Le Gall J."/>
            <person name="Gui L.L."/>
            <person name="Zhang J.P."/>
            <person name="Jiang T."/>
            <person name="Liang D.C."/>
            <person name="Chang W.R."/>
        </authorList>
    </citation>
    <scope>X-RAY CRYSTALLOGRAPHY (2.8 ANGSTROMS) IN COMPLEX WITH MANGANESE ION</scope>
    <scope>FUNCTION</scope>
    <scope>SUBCELLULAR LOCATION</scope>
    <scope>IDENTIFICATION BY MASS SPECTROMETRY</scope>
    <scope>COFACTOR</scope>
    <scope>SUBUNIT</scope>
    <source>
        <strain>ATCC 49067</strain>
    </source>
</reference>
<sequence>AKFELPELPYAYDALEPTIDKETMNIHHTKHHNTYVTKLNGALEGHEDLKNKSLNDLISNLDAVPENIRTAVRNNGGGHANHSLFWKLMSPNGGGKPTGEVADKINDKYGSFEKFQEEFAAAAAGRFGSGWAWLVVNNGEIEIMSTPIQDNPLMEGKKPILGLDVWEHAYYLKYQNKRPDYISAFWNVVNWDEVAAQYSQAA</sequence>
<comment type="function">
    <text evidence="2">Destroys superoxide anion radicals which are normally produced within the cells and which are toxic to biological systems. Active only in homodimeric state.</text>
</comment>
<comment type="catalytic activity">
    <reaction evidence="3">
        <text>2 superoxide + 2 H(+) = H2O2 + O2</text>
        <dbReference type="Rhea" id="RHEA:20696"/>
        <dbReference type="ChEBI" id="CHEBI:15378"/>
        <dbReference type="ChEBI" id="CHEBI:15379"/>
        <dbReference type="ChEBI" id="CHEBI:16240"/>
        <dbReference type="ChEBI" id="CHEBI:18421"/>
        <dbReference type="EC" id="1.15.1.1"/>
    </reaction>
</comment>
<comment type="cofactor">
    <cofactor evidence="2">
        <name>Mn(2+)</name>
        <dbReference type="ChEBI" id="CHEBI:29035"/>
    </cofactor>
    <text evidence="2">Binds 1 Mn(2+) ion per subunit.</text>
</comment>
<comment type="subunit">
    <text evidence="2 3">Homodimer; under aerobic conditions. Under anaerobic conditions it is a component of the so-called 'green protein' complex (GPC), which consists of at least two components, SodA and a nucleoside diphosphate kinase (NDK).</text>
</comment>
<comment type="subcellular location">
    <subcellularLocation>
        <location evidence="2">Cytoplasm</location>
    </subcellularLocation>
</comment>
<comment type="similarity">
    <text evidence="4">Belongs to the iron/manganese superoxide dismutase family.</text>
</comment>
<protein>
    <recommendedName>
        <fullName>Superoxide dismutase [Mn]</fullName>
        <ecNumber>1.15.1.1</ecNumber>
    </recommendedName>
</protein>
<dbReference type="EC" id="1.15.1.1"/>
<dbReference type="PDB" id="1JR9">
    <property type="method" value="X-ray"/>
    <property type="resolution" value="2.80 A"/>
    <property type="chains" value="A=1-202"/>
</dbReference>
<dbReference type="PDBsum" id="1JR9"/>
<dbReference type="SMR" id="Q7SIC3"/>
<dbReference type="STRING" id="1482.BME96_08715"/>
<dbReference type="eggNOG" id="COG0605">
    <property type="taxonomic scope" value="Bacteria"/>
</dbReference>
<dbReference type="EvolutionaryTrace" id="Q7SIC3"/>
<dbReference type="GO" id="GO:0005737">
    <property type="term" value="C:cytoplasm"/>
    <property type="evidence" value="ECO:0007669"/>
    <property type="project" value="UniProtKB-SubCell"/>
</dbReference>
<dbReference type="GO" id="GO:0046872">
    <property type="term" value="F:metal ion binding"/>
    <property type="evidence" value="ECO:0007669"/>
    <property type="project" value="UniProtKB-KW"/>
</dbReference>
<dbReference type="GO" id="GO:0004784">
    <property type="term" value="F:superoxide dismutase activity"/>
    <property type="evidence" value="ECO:0007669"/>
    <property type="project" value="UniProtKB-EC"/>
</dbReference>
<dbReference type="FunFam" id="1.10.287.990:FF:000001">
    <property type="entry name" value="Superoxide dismutase"/>
    <property type="match status" value="1"/>
</dbReference>
<dbReference type="FunFam" id="3.55.40.20:FF:000001">
    <property type="entry name" value="Superoxide dismutase"/>
    <property type="match status" value="1"/>
</dbReference>
<dbReference type="Gene3D" id="1.10.287.990">
    <property type="entry name" value="Fe,Mn superoxide dismutase (SOD) domain"/>
    <property type="match status" value="1"/>
</dbReference>
<dbReference type="Gene3D" id="3.55.40.20">
    <property type="entry name" value="Iron/manganese superoxide dismutase, C-terminal domain"/>
    <property type="match status" value="1"/>
</dbReference>
<dbReference type="InterPro" id="IPR001189">
    <property type="entry name" value="Mn/Fe_SOD"/>
</dbReference>
<dbReference type="InterPro" id="IPR019833">
    <property type="entry name" value="Mn/Fe_SOD_BS"/>
</dbReference>
<dbReference type="InterPro" id="IPR019832">
    <property type="entry name" value="Mn/Fe_SOD_C"/>
</dbReference>
<dbReference type="InterPro" id="IPR019831">
    <property type="entry name" value="Mn/Fe_SOD_N"/>
</dbReference>
<dbReference type="InterPro" id="IPR036324">
    <property type="entry name" value="Mn/Fe_SOD_N_sf"/>
</dbReference>
<dbReference type="InterPro" id="IPR036314">
    <property type="entry name" value="SOD_C_sf"/>
</dbReference>
<dbReference type="PANTHER" id="PTHR43595">
    <property type="entry name" value="37S RIBOSOMAL PROTEIN S26, MITOCHONDRIAL"/>
    <property type="match status" value="1"/>
</dbReference>
<dbReference type="PANTHER" id="PTHR43595:SF2">
    <property type="entry name" value="SMALL RIBOSOMAL SUBUNIT PROTEIN MS42"/>
    <property type="match status" value="1"/>
</dbReference>
<dbReference type="Pfam" id="PF02777">
    <property type="entry name" value="Sod_Fe_C"/>
    <property type="match status" value="1"/>
</dbReference>
<dbReference type="Pfam" id="PF00081">
    <property type="entry name" value="Sod_Fe_N"/>
    <property type="match status" value="1"/>
</dbReference>
<dbReference type="PIRSF" id="PIRSF000349">
    <property type="entry name" value="SODismutase"/>
    <property type="match status" value="1"/>
</dbReference>
<dbReference type="PRINTS" id="PR01703">
    <property type="entry name" value="MNSODISMTASE"/>
</dbReference>
<dbReference type="SUPFAM" id="SSF54719">
    <property type="entry name" value="Fe,Mn superoxide dismutase (SOD), C-terminal domain"/>
    <property type="match status" value="1"/>
</dbReference>
<dbReference type="SUPFAM" id="SSF46609">
    <property type="entry name" value="Fe,Mn superoxide dismutase (SOD), N-terminal domain"/>
    <property type="match status" value="1"/>
</dbReference>
<dbReference type="PROSITE" id="PS00088">
    <property type="entry name" value="SOD_MN"/>
    <property type="match status" value="1"/>
</dbReference>
<keyword id="KW-0002">3D-structure</keyword>
<keyword id="KW-0963">Cytoplasm</keyword>
<keyword id="KW-0464">Manganese</keyword>
<keyword id="KW-0479">Metal-binding</keyword>
<keyword id="KW-0560">Oxidoreductase</keyword>
<keyword id="KW-0597">Phosphoprotein</keyword>
<feature type="chain" id="PRO_0000398825" description="Superoxide dismutase [Mn]">
    <location>
        <begin position="1" status="less than"/>
        <end position="202"/>
    </location>
</feature>
<feature type="binding site">
    <location>
        <position position="27"/>
    </location>
    <ligand>
        <name>Mn(2+)</name>
        <dbReference type="ChEBI" id="CHEBI:29035"/>
    </ligand>
</feature>
<feature type="binding site">
    <location>
        <position position="82"/>
    </location>
    <ligand>
        <name>Mn(2+)</name>
        <dbReference type="ChEBI" id="CHEBI:29035"/>
    </ligand>
</feature>
<feature type="binding site">
    <location>
        <position position="164"/>
    </location>
    <ligand>
        <name>Mn(2+)</name>
        <dbReference type="ChEBI" id="CHEBI:29035"/>
    </ligand>
</feature>
<feature type="binding site">
    <location>
        <position position="168"/>
    </location>
    <ligand>
        <name>Mn(2+)</name>
        <dbReference type="ChEBI" id="CHEBI:29035"/>
    </ligand>
</feature>
<feature type="modified residue" description="Phosphothreonine" evidence="1">
    <location>
        <position position="34"/>
    </location>
</feature>
<feature type="modified residue" description="Phosphothreonine" evidence="1">
    <location>
        <position position="70"/>
    </location>
</feature>
<feature type="non-terminal residue">
    <location>
        <position position="1"/>
    </location>
</feature>
<feature type="turn" evidence="5">
    <location>
        <begin position="14"/>
        <end position="18"/>
    </location>
</feature>
<feature type="helix" evidence="5">
    <location>
        <begin position="21"/>
        <end position="29"/>
    </location>
</feature>
<feature type="helix" evidence="5">
    <location>
        <begin position="31"/>
        <end position="40"/>
    </location>
</feature>
<feature type="helix" evidence="5">
    <location>
        <begin position="47"/>
        <end position="50"/>
    </location>
</feature>
<feature type="helix" evidence="5">
    <location>
        <begin position="54"/>
        <end position="59"/>
    </location>
</feature>
<feature type="helix" evidence="5">
    <location>
        <begin position="66"/>
        <end position="87"/>
    </location>
</feature>
<feature type="helix" evidence="5">
    <location>
        <begin position="100"/>
        <end position="109"/>
    </location>
</feature>
<feature type="helix" evidence="5">
    <location>
        <begin position="112"/>
        <end position="125"/>
    </location>
</feature>
<feature type="strand" evidence="5">
    <location>
        <begin position="128"/>
        <end position="133"/>
    </location>
</feature>
<feature type="strand" evidence="5">
    <location>
        <begin position="144"/>
        <end position="147"/>
    </location>
</feature>
<feature type="helix" evidence="5">
    <location>
        <begin position="152"/>
        <end position="155"/>
    </location>
</feature>
<feature type="strand" evidence="5">
    <location>
        <begin position="162"/>
        <end position="164"/>
    </location>
</feature>
<feature type="helix" evidence="5">
    <location>
        <begin position="167"/>
        <end position="169"/>
    </location>
</feature>
<feature type="turn" evidence="5">
    <location>
        <begin position="170"/>
        <end position="176"/>
    </location>
</feature>
<feature type="helix" evidence="5">
    <location>
        <begin position="178"/>
        <end position="188"/>
    </location>
</feature>
<feature type="helix" evidence="5">
    <location>
        <begin position="191"/>
        <end position="201"/>
    </location>
</feature>
<evidence type="ECO:0000250" key="1"/>
<evidence type="ECO:0000269" key="2">
    <source>
    </source>
</evidence>
<evidence type="ECO:0000269" key="3">
    <source>
    </source>
</evidence>
<evidence type="ECO:0000305" key="4"/>
<evidence type="ECO:0007829" key="5">
    <source>
        <dbReference type="PDB" id="1JR9"/>
    </source>
</evidence>
<name>SODM_VIRHA</name>
<organism>
    <name type="scientific">Virgibacillus halodenitrificans</name>
    <name type="common">Bacillus halodenitrificans</name>
    <dbReference type="NCBI Taxonomy" id="1482"/>
    <lineage>
        <taxon>Bacteria</taxon>
        <taxon>Bacillati</taxon>
        <taxon>Bacillota</taxon>
        <taxon>Bacilli</taxon>
        <taxon>Bacillales</taxon>
        <taxon>Bacillaceae</taxon>
        <taxon>Virgibacillus</taxon>
    </lineage>
</organism>